<organism>
    <name type="scientific">Synechococcus sp. (strain ATCC 27144 / PCC 6301 / SAUG 1402/1)</name>
    <name type="common">Anacystis nidulans</name>
    <dbReference type="NCBI Taxonomy" id="269084"/>
    <lineage>
        <taxon>Bacteria</taxon>
        <taxon>Bacillati</taxon>
        <taxon>Cyanobacteriota</taxon>
        <taxon>Cyanophyceae</taxon>
        <taxon>Synechococcales</taxon>
        <taxon>Synechococcaceae</taxon>
        <taxon>Synechococcus</taxon>
    </lineage>
</organism>
<accession>Q5N3S5</accession>
<dbReference type="EC" id="1.3.3.3" evidence="1"/>
<dbReference type="EMBL" id="AP008231">
    <property type="protein sequence ID" value="BAD79045.1"/>
    <property type="molecule type" value="Genomic_DNA"/>
</dbReference>
<dbReference type="RefSeq" id="WP_011243167.1">
    <property type="nucleotide sequence ID" value="NZ_CP085785.1"/>
</dbReference>
<dbReference type="SMR" id="Q5N3S5"/>
<dbReference type="GeneID" id="72429506"/>
<dbReference type="KEGG" id="syc:syc0855_c"/>
<dbReference type="eggNOG" id="COG0408">
    <property type="taxonomic scope" value="Bacteria"/>
</dbReference>
<dbReference type="UniPathway" id="UPA00251">
    <property type="reaction ID" value="UER00322"/>
</dbReference>
<dbReference type="Proteomes" id="UP000001175">
    <property type="component" value="Chromosome"/>
</dbReference>
<dbReference type="GO" id="GO:0005737">
    <property type="term" value="C:cytoplasm"/>
    <property type="evidence" value="ECO:0007669"/>
    <property type="project" value="UniProtKB-SubCell"/>
</dbReference>
<dbReference type="GO" id="GO:0004109">
    <property type="term" value="F:coproporphyrinogen oxidase activity"/>
    <property type="evidence" value="ECO:0007669"/>
    <property type="project" value="UniProtKB-UniRule"/>
</dbReference>
<dbReference type="GO" id="GO:0046872">
    <property type="term" value="F:metal ion binding"/>
    <property type="evidence" value="ECO:0007669"/>
    <property type="project" value="UniProtKB-KW"/>
</dbReference>
<dbReference type="GO" id="GO:0042803">
    <property type="term" value="F:protein homodimerization activity"/>
    <property type="evidence" value="ECO:0000250"/>
    <property type="project" value="UniProtKB"/>
</dbReference>
<dbReference type="GO" id="GO:0015995">
    <property type="term" value="P:chlorophyll biosynthetic process"/>
    <property type="evidence" value="ECO:0007669"/>
    <property type="project" value="UniProtKB-UniRule"/>
</dbReference>
<dbReference type="GO" id="GO:0006782">
    <property type="term" value="P:protoporphyrinogen IX biosynthetic process"/>
    <property type="evidence" value="ECO:0007669"/>
    <property type="project" value="UniProtKB-UniRule"/>
</dbReference>
<dbReference type="FunFam" id="3.40.1500.10:FF:000007">
    <property type="entry name" value="Oxygen-dependent coproporphyrinogen-III oxidase"/>
    <property type="match status" value="1"/>
</dbReference>
<dbReference type="Gene3D" id="3.40.1500.10">
    <property type="entry name" value="Coproporphyrinogen III oxidase, aerobic"/>
    <property type="match status" value="1"/>
</dbReference>
<dbReference type="HAMAP" id="MF_00333">
    <property type="entry name" value="Coprogen_oxidas"/>
    <property type="match status" value="1"/>
</dbReference>
<dbReference type="InterPro" id="IPR001260">
    <property type="entry name" value="Coprogen_oxidase_aer"/>
</dbReference>
<dbReference type="InterPro" id="IPR036406">
    <property type="entry name" value="Coprogen_oxidase_aer_sf"/>
</dbReference>
<dbReference type="InterPro" id="IPR018375">
    <property type="entry name" value="Coprogen_oxidase_CS"/>
</dbReference>
<dbReference type="NCBIfam" id="NF003727">
    <property type="entry name" value="PRK05330.1"/>
    <property type="match status" value="1"/>
</dbReference>
<dbReference type="PANTHER" id="PTHR10755">
    <property type="entry name" value="COPROPORPHYRINOGEN III OXIDASE, MITOCHONDRIAL"/>
    <property type="match status" value="1"/>
</dbReference>
<dbReference type="PANTHER" id="PTHR10755:SF0">
    <property type="entry name" value="OXYGEN-DEPENDENT COPROPORPHYRINOGEN-III OXIDASE, MITOCHONDRIAL"/>
    <property type="match status" value="1"/>
</dbReference>
<dbReference type="Pfam" id="PF01218">
    <property type="entry name" value="Coprogen_oxidas"/>
    <property type="match status" value="1"/>
</dbReference>
<dbReference type="PIRSF" id="PIRSF000166">
    <property type="entry name" value="Coproporphyri_ox"/>
    <property type="match status" value="1"/>
</dbReference>
<dbReference type="PRINTS" id="PR00073">
    <property type="entry name" value="COPRGNOXDASE"/>
</dbReference>
<dbReference type="SUPFAM" id="SSF102886">
    <property type="entry name" value="Coproporphyrinogen III oxidase"/>
    <property type="match status" value="1"/>
</dbReference>
<dbReference type="PROSITE" id="PS01021">
    <property type="entry name" value="COPROGEN_OXIDASE"/>
    <property type="match status" value="1"/>
</dbReference>
<keyword id="KW-0149">Chlorophyll biosynthesis</keyword>
<keyword id="KW-0963">Cytoplasm</keyword>
<keyword id="KW-0350">Heme biosynthesis</keyword>
<keyword id="KW-0479">Metal-binding</keyword>
<keyword id="KW-0560">Oxidoreductase</keyword>
<keyword id="KW-0627">Porphyrin biosynthesis</keyword>
<comment type="function">
    <text evidence="1">Involved in the heme and chlorophyll biosynthesis. Catalyzes the aerobic oxidative decarboxylation of propionate groups of rings A and B of coproporphyrinogen-III to yield the vinyl groups in protoporphyrinogen-IX.</text>
</comment>
<comment type="catalytic activity">
    <reaction evidence="1">
        <text>coproporphyrinogen III + O2 + 2 H(+) = protoporphyrinogen IX + 2 CO2 + 2 H2O</text>
        <dbReference type="Rhea" id="RHEA:18257"/>
        <dbReference type="ChEBI" id="CHEBI:15377"/>
        <dbReference type="ChEBI" id="CHEBI:15378"/>
        <dbReference type="ChEBI" id="CHEBI:15379"/>
        <dbReference type="ChEBI" id="CHEBI:16526"/>
        <dbReference type="ChEBI" id="CHEBI:57307"/>
        <dbReference type="ChEBI" id="CHEBI:57309"/>
        <dbReference type="EC" id="1.3.3.3"/>
    </reaction>
</comment>
<comment type="cofactor">
    <cofactor evidence="1">
        <name>a divalent metal cation</name>
        <dbReference type="ChEBI" id="CHEBI:60240"/>
    </cofactor>
</comment>
<comment type="pathway">
    <text evidence="1">Porphyrin-containing compound metabolism; protoporphyrin-IX biosynthesis; protoporphyrinogen-IX from coproporphyrinogen-III (O2 route): step 1/1.</text>
</comment>
<comment type="subunit">
    <text evidence="1">Homodimer.</text>
</comment>
<comment type="subcellular location">
    <subcellularLocation>
        <location evidence="1">Cytoplasm</location>
    </subcellularLocation>
</comment>
<comment type="similarity">
    <text evidence="1">Belongs to the aerobic coproporphyrinogen-III oxidase family.</text>
</comment>
<reference key="1">
    <citation type="journal article" date="2007" name="Photosyn. Res.">
        <title>Complete nucleotide sequence of the freshwater unicellular cyanobacterium Synechococcus elongatus PCC 6301 chromosome: gene content and organization.</title>
        <authorList>
            <person name="Sugita C."/>
            <person name="Ogata K."/>
            <person name="Shikata M."/>
            <person name="Jikuya H."/>
            <person name="Takano J."/>
            <person name="Furumichi M."/>
            <person name="Kanehisa M."/>
            <person name="Omata T."/>
            <person name="Sugiura M."/>
            <person name="Sugita M."/>
        </authorList>
    </citation>
    <scope>NUCLEOTIDE SEQUENCE [LARGE SCALE GENOMIC DNA]</scope>
    <source>
        <strain>ATCC 27144 / PCC 6301 / SAUG 1402/1</strain>
    </source>
</reference>
<protein>
    <recommendedName>
        <fullName evidence="1">Oxygen-dependent coproporphyrinogen-III oxidase</fullName>
        <shortName evidence="1">CPO</shortName>
        <shortName evidence="1">Coprogen oxidase</shortName>
        <shortName evidence="1">Coproporphyrinogenase</shortName>
        <ecNumber evidence="1">1.3.3.3</ecNumber>
    </recommendedName>
</protein>
<proteinExistence type="inferred from homology"/>
<feature type="chain" id="PRO_0000109923" description="Oxygen-dependent coproporphyrinogen-III oxidase">
    <location>
        <begin position="1"/>
        <end position="342"/>
    </location>
</feature>
<feature type="region of interest" description="Important for dimerization" evidence="1">
    <location>
        <begin position="277"/>
        <end position="312"/>
    </location>
</feature>
<feature type="active site" description="Proton donor" evidence="1">
    <location>
        <position position="121"/>
    </location>
</feature>
<feature type="binding site" evidence="1">
    <location>
        <position position="107"/>
    </location>
    <ligand>
        <name>substrate</name>
    </ligand>
</feature>
<feature type="binding site" evidence="1">
    <location>
        <position position="111"/>
    </location>
    <ligand>
        <name>a divalent metal cation</name>
        <dbReference type="ChEBI" id="CHEBI:60240"/>
    </ligand>
</feature>
<feature type="binding site" evidence="1">
    <location>
        <position position="121"/>
    </location>
    <ligand>
        <name>a divalent metal cation</name>
        <dbReference type="ChEBI" id="CHEBI:60240"/>
    </ligand>
</feature>
<feature type="binding site" evidence="1">
    <location>
        <begin position="123"/>
        <end position="125"/>
    </location>
    <ligand>
        <name>substrate</name>
    </ligand>
</feature>
<feature type="binding site" evidence="1">
    <location>
        <position position="155"/>
    </location>
    <ligand>
        <name>a divalent metal cation</name>
        <dbReference type="ChEBI" id="CHEBI:60240"/>
    </ligand>
</feature>
<feature type="binding site" evidence="1">
    <location>
        <position position="185"/>
    </location>
    <ligand>
        <name>a divalent metal cation</name>
        <dbReference type="ChEBI" id="CHEBI:60240"/>
    </ligand>
</feature>
<feature type="site" description="Important for dimerization" evidence="1">
    <location>
        <position position="185"/>
    </location>
</feature>
<sequence>MTVATPNLTTVPVPPSDSRERVKQFMQTLQDEICAGLEALDGGGQFREDSWERPEGGGGRSRVIREGNVFEQGGVNFSEVWGEKLPPSILAQYPEAAGHGYFATGTSMVLHPRNPYIPTVHLNYRYFEAGPVWWFGGGADLTPYYPFAEDAKHFHSSFKAACDRHYPQFYDVFKLWCDEYFFLKHRGETRGIGGIFFDYQDGRGDLYNKGPAPSGPAGQKAAEVGIVSDLNWEKLFAFAQDCGRTFLPAYSPIVERRKDTPWGDRERQFQLYRRGRYVEFNLVYDRGTIFGLQTNGRTESILMSLPPLVRWEYMYQPEAGSREQELYDVFLKPQDWVNWPTA</sequence>
<gene>
    <name evidence="1" type="primary">hemF</name>
    <name type="ordered locus">syc0855_c</name>
</gene>
<name>HEM6_SYNP6</name>
<evidence type="ECO:0000255" key="1">
    <source>
        <dbReference type="HAMAP-Rule" id="MF_00333"/>
    </source>
</evidence>